<accession>Q48RW0</accession>
<feature type="chain" id="PRO_0000208157" description="Galactose-6-phosphate isomerase subunit LacB 1">
    <location>
        <begin position="1"/>
        <end position="171"/>
    </location>
</feature>
<gene>
    <name evidence="1" type="primary">lacB1</name>
    <name type="synonym">lacB.1</name>
    <name type="ordered locus">M28_Spy1440</name>
</gene>
<protein>
    <recommendedName>
        <fullName evidence="1">Galactose-6-phosphate isomerase subunit LacB 1</fullName>
        <ecNumber evidence="1">5.3.1.26</ecNumber>
    </recommendedName>
</protein>
<dbReference type="EC" id="5.3.1.26" evidence="1"/>
<dbReference type="EMBL" id="CP000056">
    <property type="protein sequence ID" value="AAX72550.1"/>
    <property type="status" value="ALT_INIT"/>
    <property type="molecule type" value="Genomic_DNA"/>
</dbReference>
<dbReference type="SMR" id="Q48RW0"/>
<dbReference type="KEGG" id="spb:M28_Spy1440"/>
<dbReference type="HOGENOM" id="CLU_091396_2_0_9"/>
<dbReference type="UniPathway" id="UPA00702">
    <property type="reaction ID" value="UER00714"/>
</dbReference>
<dbReference type="GO" id="GO:0050044">
    <property type="term" value="F:galactose-6-phosphate isomerase activity"/>
    <property type="evidence" value="ECO:0007669"/>
    <property type="project" value="UniProtKB-UniRule"/>
</dbReference>
<dbReference type="GO" id="GO:0004751">
    <property type="term" value="F:ribose-5-phosphate isomerase activity"/>
    <property type="evidence" value="ECO:0007669"/>
    <property type="project" value="TreeGrafter"/>
</dbReference>
<dbReference type="GO" id="GO:0019316">
    <property type="term" value="P:D-allose catabolic process"/>
    <property type="evidence" value="ECO:0007669"/>
    <property type="project" value="TreeGrafter"/>
</dbReference>
<dbReference type="GO" id="GO:0019388">
    <property type="term" value="P:galactose catabolic process"/>
    <property type="evidence" value="ECO:0007669"/>
    <property type="project" value="UniProtKB-UniPathway"/>
</dbReference>
<dbReference type="GO" id="GO:0019512">
    <property type="term" value="P:lactose catabolic process via tagatose-6-phosphate"/>
    <property type="evidence" value="ECO:0007669"/>
    <property type="project" value="UniProtKB-UniRule"/>
</dbReference>
<dbReference type="GO" id="GO:0009052">
    <property type="term" value="P:pentose-phosphate shunt, non-oxidative branch"/>
    <property type="evidence" value="ECO:0007669"/>
    <property type="project" value="TreeGrafter"/>
</dbReference>
<dbReference type="Gene3D" id="3.40.1400.10">
    <property type="entry name" value="Sugar-phosphate isomerase, RpiB/LacA/LacB"/>
    <property type="match status" value="1"/>
</dbReference>
<dbReference type="HAMAP" id="MF_01556">
    <property type="entry name" value="LacB"/>
    <property type="match status" value="1"/>
</dbReference>
<dbReference type="InterPro" id="IPR004784">
    <property type="entry name" value="LacB"/>
</dbReference>
<dbReference type="InterPro" id="IPR003500">
    <property type="entry name" value="RpiB_LacA_LacB"/>
</dbReference>
<dbReference type="InterPro" id="IPR036569">
    <property type="entry name" value="RpiB_LacA_LacB_sf"/>
</dbReference>
<dbReference type="NCBIfam" id="TIGR01119">
    <property type="entry name" value="lacB"/>
    <property type="match status" value="1"/>
</dbReference>
<dbReference type="NCBIfam" id="NF004051">
    <property type="entry name" value="PRK05571.1"/>
    <property type="match status" value="1"/>
</dbReference>
<dbReference type="NCBIfam" id="NF006381">
    <property type="entry name" value="PRK08622.1"/>
    <property type="match status" value="1"/>
</dbReference>
<dbReference type="NCBIfam" id="NF009258">
    <property type="entry name" value="PRK12615.1"/>
    <property type="match status" value="1"/>
</dbReference>
<dbReference type="NCBIfam" id="TIGR00689">
    <property type="entry name" value="rpiB_lacA_lacB"/>
    <property type="match status" value="1"/>
</dbReference>
<dbReference type="PANTHER" id="PTHR30345:SF0">
    <property type="entry name" value="DNA DAMAGE-REPAIR_TOLERATION PROTEIN DRT102"/>
    <property type="match status" value="1"/>
</dbReference>
<dbReference type="PANTHER" id="PTHR30345">
    <property type="entry name" value="RIBOSE-5-PHOSPHATE ISOMERASE B"/>
    <property type="match status" value="1"/>
</dbReference>
<dbReference type="Pfam" id="PF02502">
    <property type="entry name" value="LacAB_rpiB"/>
    <property type="match status" value="1"/>
</dbReference>
<dbReference type="PIRSF" id="PIRSF005384">
    <property type="entry name" value="RpiB_LacA_B"/>
    <property type="match status" value="1"/>
</dbReference>
<dbReference type="SUPFAM" id="SSF89623">
    <property type="entry name" value="Ribose/Galactose isomerase RpiB/AlsB"/>
    <property type="match status" value="1"/>
</dbReference>
<name>LACB1_STRPM</name>
<comment type="catalytic activity">
    <reaction evidence="1">
        <text>aldehydo-D-galactose 6-phosphate = keto-D-tagatose 6-phosphate</text>
        <dbReference type="Rhea" id="RHEA:13033"/>
        <dbReference type="ChEBI" id="CHEBI:58255"/>
        <dbReference type="ChEBI" id="CHEBI:134283"/>
        <dbReference type="EC" id="5.3.1.26"/>
    </reaction>
</comment>
<comment type="pathway">
    <text evidence="1">Carbohydrate metabolism; D-galactose 6-phosphate degradation; D-tagatose 6-phosphate from D-galactose 6-phosphate: step 1/1.</text>
</comment>
<comment type="subunit">
    <text evidence="1">Heteromultimeric protein consisting of LacA and LacB.</text>
</comment>
<comment type="similarity">
    <text evidence="1">Belongs to the LacAB/RpiB family.</text>
</comment>
<comment type="sequence caution" evidence="2">
    <conflict type="erroneous initiation">
        <sequence resource="EMBL-CDS" id="AAX72550"/>
    </conflict>
</comment>
<organism>
    <name type="scientific">Streptococcus pyogenes serotype M28 (strain MGAS6180)</name>
    <dbReference type="NCBI Taxonomy" id="319701"/>
    <lineage>
        <taxon>Bacteria</taxon>
        <taxon>Bacillati</taxon>
        <taxon>Bacillota</taxon>
        <taxon>Bacilli</taxon>
        <taxon>Lactobacillales</taxon>
        <taxon>Streptococcaceae</taxon>
        <taxon>Streptococcus</taxon>
    </lineage>
</organism>
<reference key="1">
    <citation type="journal article" date="2005" name="J. Infect. Dis.">
        <title>Genome sequence of a serotype M28 strain of group A Streptococcus: potential new insights into puerperal sepsis and bacterial disease specificity.</title>
        <authorList>
            <person name="Green N.M."/>
            <person name="Zhang S."/>
            <person name="Porcella S.F."/>
            <person name="Nagiec M.J."/>
            <person name="Barbian K.D."/>
            <person name="Beres S.B."/>
            <person name="Lefebvre R.B."/>
            <person name="Musser J.M."/>
        </authorList>
    </citation>
    <scope>NUCLEOTIDE SEQUENCE [LARGE SCALE GENOMIC DNA]</scope>
    <source>
        <strain>MGAS6180</strain>
    </source>
</reference>
<evidence type="ECO:0000255" key="1">
    <source>
        <dbReference type="HAMAP-Rule" id="MF_01556"/>
    </source>
</evidence>
<evidence type="ECO:0000305" key="2"/>
<proteinExistence type="inferred from homology"/>
<sequence length="171" mass="18926">MKIAIGCDHIVTNEKMAVSDFLKSKGYDVIDCGTYDHTRTHYPIFGKKVGEAVVNGQADLGVCICGTGVGINNAVNKVPGIRSALVRDMTTALYAKEELNANVIGFGGKITGELLMCDIIDAFIKAEYKETEENKKLIAKIAHLESHHANQEDPDFFTEFLEKWDRGEYHD</sequence>
<keyword id="KW-0413">Isomerase</keyword>
<keyword id="KW-0423">Lactose metabolism</keyword>